<name>KCA10_HUMAN</name>
<feature type="chain" id="PRO_0000308275" description="Potassium voltage-gated channel subfamily A member 10">
    <location>
        <begin position="1"/>
        <end position="511"/>
    </location>
</feature>
<feature type="transmembrane region" description="Helical; Name=Segment S1" evidence="3">
    <location>
        <begin position="218"/>
        <end position="238"/>
    </location>
</feature>
<feature type="transmembrane region" description="Helical; Name=Segment S2" evidence="3">
    <location>
        <begin position="271"/>
        <end position="292"/>
    </location>
</feature>
<feature type="transmembrane region" description="Helical; Name=Segment S3" evidence="3">
    <location>
        <begin position="303"/>
        <end position="323"/>
    </location>
</feature>
<feature type="transmembrane region" description="Helical; Voltage-sensor; Name=Segment S4" evidence="3">
    <location>
        <begin position="339"/>
        <end position="358"/>
    </location>
</feature>
<feature type="transmembrane region" description="Helical; Name=Segment S5" evidence="3">
    <location>
        <begin position="375"/>
        <end position="395"/>
    </location>
</feature>
<feature type="transmembrane region" description="Helical; Name=Segment S6" evidence="3">
    <location>
        <begin position="436"/>
        <end position="456"/>
    </location>
</feature>
<feature type="region of interest" description="Disordered" evidence="4">
    <location>
        <begin position="22"/>
        <end position="50"/>
    </location>
</feature>
<feature type="region of interest" description="Disordered" evidence="4">
    <location>
        <begin position="489"/>
        <end position="511"/>
    </location>
</feature>
<feature type="short sequence motif" description="Selectivity filter" evidence="1">
    <location>
        <begin position="421"/>
        <end position="426"/>
    </location>
</feature>
<feature type="lipid moiety-binding region" description="S-palmitoyl cysteine" evidence="3">
    <location>
        <position position="293"/>
    </location>
</feature>
<feature type="glycosylation site" description="N-linked (GlcNAc...) asparagine" evidence="3">
    <location>
        <position position="256"/>
    </location>
</feature>
<feature type="glycosylation site" description="N-linked (GlcNAc...) asparagine" evidence="3">
    <location>
        <position position="334"/>
    </location>
</feature>
<feature type="glycosylation site" description="N-linked (GlcNAc...) asparagine" evidence="3">
    <location>
        <position position="498"/>
    </location>
</feature>
<feature type="sequence variant" id="VAR_036778" description="In a colorectal cancer sample; somatic mutation; dbSNP:rs755748044." evidence="8">
    <original>R</original>
    <variation>H</variation>
    <location>
        <position position="200"/>
    </location>
</feature>
<feature type="sequence variant" id="VAR_036779" description="In dbSNP:rs34970857.">
    <original>V</original>
    <variation>M</variation>
    <location>
        <position position="220"/>
    </location>
</feature>
<feature type="sequence variant" id="VAR_036780" description="In dbSNP:rs3748729.">
    <original>S</original>
    <variation>N</variation>
    <location>
        <position position="258"/>
    </location>
</feature>
<sequence>MDVCGWKEMEVALVNFDNSDEIQEEPGYATDFDSTSPKGRPGGSSFSNGKILISESTNHETAFSKLPGDYADPPGPEPVVLNEGNQRVIINIAGLRFETQLRTLSQFPETLLGDREKRMQFFDSMRNEYFFDRNRPSFDGILYYYQSGGKIRRPANVPIDIFADEISFYELGSEAMDQFREDEGFIKDPETLLPTNDIHRQFWLLFEYPESSSAARAVAVVSVLVVVISITIFCLETLPEFREDRELKVVRDPNLNMSKTVLSQTMFTDPFFMVESTCIVWFTFELVLRFVVCPSKTDFFRNIMNIIDIISIIPYFATLITELVQETEPSAQQNMSLAILRIIRLVRVFRIFKLSRHSKGLQILGQTLKASMRELGLLIFFLFIGVILFSSAVYFAEVDEPESHFSSIPDGFWWAVVTMTTVGYGDMCPTTPGGKIVGTLCAIAGVLTIALPVPVIVSNFNYFYHRETENEEKQNIPGEIERILNSVGSRMGSTDSLNKTNGGCSTEKSRK</sequence>
<protein>
    <recommendedName>
        <fullName>Potassium voltage-gated channel subfamily A member 10</fullName>
    </recommendedName>
    <alternativeName>
        <fullName>Voltage-gated potassium channel subunit Kv1.8</fullName>
    </alternativeName>
</protein>
<gene>
    <name evidence="10" type="primary">KCNA10</name>
</gene>
<proteinExistence type="evidence at protein level"/>
<keyword id="KW-0325">Glycoprotein</keyword>
<keyword id="KW-0407">Ion channel</keyword>
<keyword id="KW-0406">Ion transport</keyword>
<keyword id="KW-0449">Lipoprotein</keyword>
<keyword id="KW-0472">Membrane</keyword>
<keyword id="KW-0564">Palmitate</keyword>
<keyword id="KW-0630">Potassium</keyword>
<keyword id="KW-0631">Potassium channel</keyword>
<keyword id="KW-0633">Potassium transport</keyword>
<keyword id="KW-1185">Reference proteome</keyword>
<keyword id="KW-0812">Transmembrane</keyword>
<keyword id="KW-1133">Transmembrane helix</keyword>
<keyword id="KW-0813">Transport</keyword>
<keyword id="KW-0851">Voltage-gated channel</keyword>
<organism>
    <name type="scientific">Homo sapiens</name>
    <name type="common">Human</name>
    <dbReference type="NCBI Taxonomy" id="9606"/>
    <lineage>
        <taxon>Eukaryota</taxon>
        <taxon>Metazoa</taxon>
        <taxon>Chordata</taxon>
        <taxon>Craniata</taxon>
        <taxon>Vertebrata</taxon>
        <taxon>Euteleostomi</taxon>
        <taxon>Mammalia</taxon>
        <taxon>Eutheria</taxon>
        <taxon>Euarchontoglires</taxon>
        <taxon>Primates</taxon>
        <taxon>Haplorrhini</taxon>
        <taxon>Catarrhini</taxon>
        <taxon>Hominidae</taxon>
        <taxon>Homo</taxon>
    </lineage>
</organism>
<accession>Q16322</accession>
<dbReference type="EMBL" id="U96110">
    <property type="protein sequence ID" value="AAC51333.1"/>
    <property type="molecule type" value="Genomic_DNA"/>
</dbReference>
<dbReference type="EMBL" id="AL358215">
    <property type="status" value="NOT_ANNOTATED_CDS"/>
    <property type="molecule type" value="Genomic_DNA"/>
</dbReference>
<dbReference type="EMBL" id="CH471122">
    <property type="protein sequence ID" value="EAW56454.1"/>
    <property type="molecule type" value="Genomic_DNA"/>
</dbReference>
<dbReference type="EMBL" id="BC074990">
    <property type="protein sequence ID" value="AAH74990.1"/>
    <property type="molecule type" value="mRNA"/>
</dbReference>
<dbReference type="CCDS" id="CCDS826.1"/>
<dbReference type="RefSeq" id="NP_005540.1">
    <property type="nucleotide sequence ID" value="NM_005549.2"/>
</dbReference>
<dbReference type="SMR" id="Q16322"/>
<dbReference type="BioGRID" id="109946">
    <property type="interactions" value="24"/>
</dbReference>
<dbReference type="CORUM" id="Q16322"/>
<dbReference type="FunCoup" id="Q16322">
    <property type="interactions" value="30"/>
</dbReference>
<dbReference type="IntAct" id="Q16322">
    <property type="interactions" value="22"/>
</dbReference>
<dbReference type="STRING" id="9606.ENSP00000358786"/>
<dbReference type="ChEMBL" id="CHEMBL2363001"/>
<dbReference type="DrugBank" id="DB06637">
    <property type="generic name" value="Dalfampridine"/>
</dbReference>
<dbReference type="DrugBank" id="DB00228">
    <property type="generic name" value="Enflurane"/>
</dbReference>
<dbReference type="DrugBank" id="DB01110">
    <property type="generic name" value="Miconazole"/>
</dbReference>
<dbReference type="DrugBank" id="DB01069">
    <property type="generic name" value="Promethazine"/>
</dbReference>
<dbReference type="DrugCentral" id="Q16322"/>
<dbReference type="GuidetoPHARMACOLOGY" id="545"/>
<dbReference type="GlyCosmos" id="Q16322">
    <property type="glycosylation" value="3 sites, No reported glycans"/>
</dbReference>
<dbReference type="GlyGen" id="Q16322">
    <property type="glycosylation" value="3 sites"/>
</dbReference>
<dbReference type="iPTMnet" id="Q16322"/>
<dbReference type="PhosphoSitePlus" id="Q16322"/>
<dbReference type="BioMuta" id="KCNA10"/>
<dbReference type="DMDM" id="74739879"/>
<dbReference type="MassIVE" id="Q16322"/>
<dbReference type="PaxDb" id="9606-ENSP00000358786"/>
<dbReference type="PeptideAtlas" id="Q16322"/>
<dbReference type="ProteomicsDB" id="60854"/>
<dbReference type="Pumba" id="Q16322"/>
<dbReference type="Antibodypedia" id="20099">
    <property type="antibodies" value="88 antibodies from 22 providers"/>
</dbReference>
<dbReference type="DNASU" id="3744"/>
<dbReference type="Ensembl" id="ENST00000369771.4">
    <property type="protein sequence ID" value="ENSP00000358786.2"/>
    <property type="gene ID" value="ENSG00000143105.7"/>
</dbReference>
<dbReference type="GeneID" id="3744"/>
<dbReference type="KEGG" id="hsa:3744"/>
<dbReference type="MANE-Select" id="ENST00000369771.4">
    <property type="protein sequence ID" value="ENSP00000358786.2"/>
    <property type="RefSeq nucleotide sequence ID" value="NM_005549.2"/>
    <property type="RefSeq protein sequence ID" value="NP_005540.1"/>
</dbReference>
<dbReference type="UCSC" id="uc001dzt.2">
    <property type="organism name" value="human"/>
</dbReference>
<dbReference type="AGR" id="HGNC:6219"/>
<dbReference type="CTD" id="3744"/>
<dbReference type="DisGeNET" id="3744"/>
<dbReference type="GeneCards" id="KCNA10"/>
<dbReference type="HGNC" id="HGNC:6219">
    <property type="gene designation" value="KCNA10"/>
</dbReference>
<dbReference type="HPA" id="ENSG00000143105">
    <property type="expression patterns" value="Not detected"/>
</dbReference>
<dbReference type="MIM" id="602420">
    <property type="type" value="gene"/>
</dbReference>
<dbReference type="neXtProt" id="NX_Q16322"/>
<dbReference type="OpenTargets" id="ENSG00000143105"/>
<dbReference type="PharmGKB" id="PA30020"/>
<dbReference type="VEuPathDB" id="HostDB:ENSG00000143105"/>
<dbReference type="eggNOG" id="KOG1545">
    <property type="taxonomic scope" value="Eukaryota"/>
</dbReference>
<dbReference type="GeneTree" id="ENSGT00940000159534"/>
<dbReference type="HOGENOM" id="CLU_011722_4_0_1"/>
<dbReference type="InParanoid" id="Q16322"/>
<dbReference type="OMA" id="NWRILIS"/>
<dbReference type="OrthoDB" id="415460at2759"/>
<dbReference type="PAN-GO" id="Q16322">
    <property type="GO annotations" value="4 GO annotations based on evolutionary models"/>
</dbReference>
<dbReference type="PhylomeDB" id="Q16322"/>
<dbReference type="TreeFam" id="TF313103"/>
<dbReference type="PathwayCommons" id="Q16322"/>
<dbReference type="Reactome" id="R-HSA-1296072">
    <property type="pathway name" value="Voltage gated Potassium channels"/>
</dbReference>
<dbReference type="SignaLink" id="Q16322"/>
<dbReference type="BioGRID-ORCS" id="3744">
    <property type="hits" value="109 hits in 1145 CRISPR screens"/>
</dbReference>
<dbReference type="GeneWiki" id="KCNA10"/>
<dbReference type="GenomeRNAi" id="3744"/>
<dbReference type="Pharos" id="Q16322">
    <property type="development level" value="Tclin"/>
</dbReference>
<dbReference type="PRO" id="PR:Q16322"/>
<dbReference type="Proteomes" id="UP000005640">
    <property type="component" value="Chromosome 1"/>
</dbReference>
<dbReference type="RNAct" id="Q16322">
    <property type="molecule type" value="protein"/>
</dbReference>
<dbReference type="Bgee" id="ENSG00000143105">
    <property type="expression patterns" value="Expressed in stomach and 3 other cell types or tissues"/>
</dbReference>
<dbReference type="GO" id="GO:0016020">
    <property type="term" value="C:membrane"/>
    <property type="evidence" value="ECO:0000318"/>
    <property type="project" value="GO_Central"/>
</dbReference>
<dbReference type="GO" id="GO:0005886">
    <property type="term" value="C:plasma membrane"/>
    <property type="evidence" value="ECO:0000304"/>
    <property type="project" value="Reactome"/>
</dbReference>
<dbReference type="GO" id="GO:0008076">
    <property type="term" value="C:voltage-gated potassium channel complex"/>
    <property type="evidence" value="ECO:0000318"/>
    <property type="project" value="GO_Central"/>
</dbReference>
<dbReference type="GO" id="GO:0005251">
    <property type="term" value="F:delayed rectifier potassium channel activity"/>
    <property type="evidence" value="ECO:0000318"/>
    <property type="project" value="GO_Central"/>
</dbReference>
<dbReference type="GO" id="GO:0005221">
    <property type="term" value="F:intracellularly cyclic nucleotide-activated monoatomic cation channel activity"/>
    <property type="evidence" value="ECO:0000304"/>
    <property type="project" value="ProtInc"/>
</dbReference>
<dbReference type="GO" id="GO:0005249">
    <property type="term" value="F:voltage-gated potassium channel activity"/>
    <property type="evidence" value="ECO:0000314"/>
    <property type="project" value="MGI"/>
</dbReference>
<dbReference type="GO" id="GO:0001508">
    <property type="term" value="P:action potential"/>
    <property type="evidence" value="ECO:0000318"/>
    <property type="project" value="GO_Central"/>
</dbReference>
<dbReference type="GO" id="GO:0071805">
    <property type="term" value="P:potassium ion transmembrane transport"/>
    <property type="evidence" value="ECO:0000318"/>
    <property type="project" value="GO_Central"/>
</dbReference>
<dbReference type="GO" id="GO:0006813">
    <property type="term" value="P:potassium ion transport"/>
    <property type="evidence" value="ECO:0000314"/>
    <property type="project" value="MGI"/>
</dbReference>
<dbReference type="GO" id="GO:0051260">
    <property type="term" value="P:protein homooligomerization"/>
    <property type="evidence" value="ECO:0007669"/>
    <property type="project" value="InterPro"/>
</dbReference>
<dbReference type="CDD" id="cd18409">
    <property type="entry name" value="BTB_POZ_KCNA10"/>
    <property type="match status" value="1"/>
</dbReference>
<dbReference type="FunFam" id="1.10.287.70:FF:000002">
    <property type="entry name" value="Potassium voltage-gated channel subfamily a member"/>
    <property type="match status" value="1"/>
</dbReference>
<dbReference type="FunFam" id="3.30.710.10:FF:000012">
    <property type="entry name" value="Potassium voltage-gated channel subfamily A member 10"/>
    <property type="match status" value="1"/>
</dbReference>
<dbReference type="FunFam" id="1.20.120.350:FF:000033">
    <property type="entry name" value="potassium voltage-gated channel subfamily A member 10"/>
    <property type="match status" value="1"/>
</dbReference>
<dbReference type="Gene3D" id="1.10.287.70">
    <property type="match status" value="1"/>
</dbReference>
<dbReference type="Gene3D" id="3.30.710.10">
    <property type="entry name" value="Potassium Channel Kv1.1, Chain A"/>
    <property type="match status" value="1"/>
</dbReference>
<dbReference type="Gene3D" id="1.20.120.350">
    <property type="entry name" value="Voltage-gated potassium channels. Chain C"/>
    <property type="match status" value="1"/>
</dbReference>
<dbReference type="InterPro" id="IPR000210">
    <property type="entry name" value="BTB/POZ_dom"/>
</dbReference>
<dbReference type="InterPro" id="IPR005821">
    <property type="entry name" value="Ion_trans_dom"/>
</dbReference>
<dbReference type="InterPro" id="IPR003968">
    <property type="entry name" value="K_chnl_volt-dep_Kv"/>
</dbReference>
<dbReference type="InterPro" id="IPR003972">
    <property type="entry name" value="K_chnl_volt-dep_Kv1"/>
</dbReference>
<dbReference type="InterPro" id="IPR011333">
    <property type="entry name" value="SKP1/BTB/POZ_sf"/>
</dbReference>
<dbReference type="InterPro" id="IPR003131">
    <property type="entry name" value="T1-type_BTB"/>
</dbReference>
<dbReference type="InterPro" id="IPR028325">
    <property type="entry name" value="VG_K_chnl"/>
</dbReference>
<dbReference type="InterPro" id="IPR027359">
    <property type="entry name" value="Volt_channel_dom_sf"/>
</dbReference>
<dbReference type="PANTHER" id="PTHR11537:SF44">
    <property type="entry name" value="POTASSIUM VOLTAGE-GATED CHANNEL SUBFAMILY A MEMBER 10"/>
    <property type="match status" value="1"/>
</dbReference>
<dbReference type="PANTHER" id="PTHR11537">
    <property type="entry name" value="VOLTAGE-GATED POTASSIUM CHANNEL"/>
    <property type="match status" value="1"/>
</dbReference>
<dbReference type="Pfam" id="PF02214">
    <property type="entry name" value="BTB_2"/>
    <property type="match status" value="1"/>
</dbReference>
<dbReference type="Pfam" id="PF00520">
    <property type="entry name" value="Ion_trans"/>
    <property type="match status" value="1"/>
</dbReference>
<dbReference type="PRINTS" id="PR00169">
    <property type="entry name" value="KCHANNEL"/>
</dbReference>
<dbReference type="PRINTS" id="PR01491">
    <property type="entry name" value="KVCHANNEL"/>
</dbReference>
<dbReference type="PRINTS" id="PR01496">
    <property type="entry name" value="SHAKERCHANEL"/>
</dbReference>
<dbReference type="SMART" id="SM00225">
    <property type="entry name" value="BTB"/>
    <property type="match status" value="1"/>
</dbReference>
<dbReference type="SUPFAM" id="SSF54695">
    <property type="entry name" value="POZ domain"/>
    <property type="match status" value="1"/>
</dbReference>
<dbReference type="SUPFAM" id="SSF81324">
    <property type="entry name" value="Voltage-gated potassium channels"/>
    <property type="match status" value="1"/>
</dbReference>
<reference key="1">
    <citation type="journal article" date="1997" name="Genomics">
        <title>Genomic localization of the human gene for KCNA10, a cGMP-activated K channel.</title>
        <authorList>
            <person name="Orias M."/>
            <person name="Bray-Ward P."/>
            <person name="Curran M.E."/>
            <person name="Keating M.T."/>
            <person name="Desir G.V."/>
        </authorList>
    </citation>
    <scope>NUCLEOTIDE SEQUENCE [GENOMIC DNA]</scope>
</reference>
<reference key="2">
    <citation type="journal article" date="2006" name="Nature">
        <title>The DNA sequence and biological annotation of human chromosome 1.</title>
        <authorList>
            <person name="Gregory S.G."/>
            <person name="Barlow K.F."/>
            <person name="McLay K.E."/>
            <person name="Kaul R."/>
            <person name="Swarbreck D."/>
            <person name="Dunham A."/>
            <person name="Scott C.E."/>
            <person name="Howe K.L."/>
            <person name="Woodfine K."/>
            <person name="Spencer C.C.A."/>
            <person name="Jones M.C."/>
            <person name="Gillson C."/>
            <person name="Searle S."/>
            <person name="Zhou Y."/>
            <person name="Kokocinski F."/>
            <person name="McDonald L."/>
            <person name="Evans R."/>
            <person name="Phillips K."/>
            <person name="Atkinson A."/>
            <person name="Cooper R."/>
            <person name="Jones C."/>
            <person name="Hall R.E."/>
            <person name="Andrews T.D."/>
            <person name="Lloyd C."/>
            <person name="Ainscough R."/>
            <person name="Almeida J.P."/>
            <person name="Ambrose K.D."/>
            <person name="Anderson F."/>
            <person name="Andrew R.W."/>
            <person name="Ashwell R.I.S."/>
            <person name="Aubin K."/>
            <person name="Babbage A.K."/>
            <person name="Bagguley C.L."/>
            <person name="Bailey J."/>
            <person name="Beasley H."/>
            <person name="Bethel G."/>
            <person name="Bird C.P."/>
            <person name="Bray-Allen S."/>
            <person name="Brown J.Y."/>
            <person name="Brown A.J."/>
            <person name="Buckley D."/>
            <person name="Burton J."/>
            <person name="Bye J."/>
            <person name="Carder C."/>
            <person name="Chapman J.C."/>
            <person name="Clark S.Y."/>
            <person name="Clarke G."/>
            <person name="Clee C."/>
            <person name="Cobley V."/>
            <person name="Collier R.E."/>
            <person name="Corby N."/>
            <person name="Coville G.J."/>
            <person name="Davies J."/>
            <person name="Deadman R."/>
            <person name="Dunn M."/>
            <person name="Earthrowl M."/>
            <person name="Ellington A.G."/>
            <person name="Errington H."/>
            <person name="Frankish A."/>
            <person name="Frankland J."/>
            <person name="French L."/>
            <person name="Garner P."/>
            <person name="Garnett J."/>
            <person name="Gay L."/>
            <person name="Ghori M.R.J."/>
            <person name="Gibson R."/>
            <person name="Gilby L.M."/>
            <person name="Gillett W."/>
            <person name="Glithero R.J."/>
            <person name="Grafham D.V."/>
            <person name="Griffiths C."/>
            <person name="Griffiths-Jones S."/>
            <person name="Grocock R."/>
            <person name="Hammond S."/>
            <person name="Harrison E.S.I."/>
            <person name="Hart E."/>
            <person name="Haugen E."/>
            <person name="Heath P.D."/>
            <person name="Holmes S."/>
            <person name="Holt K."/>
            <person name="Howden P.J."/>
            <person name="Hunt A.R."/>
            <person name="Hunt S.E."/>
            <person name="Hunter G."/>
            <person name="Isherwood J."/>
            <person name="James R."/>
            <person name="Johnson C."/>
            <person name="Johnson D."/>
            <person name="Joy A."/>
            <person name="Kay M."/>
            <person name="Kershaw J.K."/>
            <person name="Kibukawa M."/>
            <person name="Kimberley A.M."/>
            <person name="King A."/>
            <person name="Knights A.J."/>
            <person name="Lad H."/>
            <person name="Laird G."/>
            <person name="Lawlor S."/>
            <person name="Leongamornlert D.A."/>
            <person name="Lloyd D.M."/>
            <person name="Loveland J."/>
            <person name="Lovell J."/>
            <person name="Lush M.J."/>
            <person name="Lyne R."/>
            <person name="Martin S."/>
            <person name="Mashreghi-Mohammadi M."/>
            <person name="Matthews L."/>
            <person name="Matthews N.S.W."/>
            <person name="McLaren S."/>
            <person name="Milne S."/>
            <person name="Mistry S."/>
            <person name="Moore M.J.F."/>
            <person name="Nickerson T."/>
            <person name="O'Dell C.N."/>
            <person name="Oliver K."/>
            <person name="Palmeiri A."/>
            <person name="Palmer S.A."/>
            <person name="Parker A."/>
            <person name="Patel D."/>
            <person name="Pearce A.V."/>
            <person name="Peck A.I."/>
            <person name="Pelan S."/>
            <person name="Phelps K."/>
            <person name="Phillimore B.J."/>
            <person name="Plumb R."/>
            <person name="Rajan J."/>
            <person name="Raymond C."/>
            <person name="Rouse G."/>
            <person name="Saenphimmachak C."/>
            <person name="Sehra H.K."/>
            <person name="Sheridan E."/>
            <person name="Shownkeen R."/>
            <person name="Sims S."/>
            <person name="Skuce C.D."/>
            <person name="Smith M."/>
            <person name="Steward C."/>
            <person name="Subramanian S."/>
            <person name="Sycamore N."/>
            <person name="Tracey A."/>
            <person name="Tromans A."/>
            <person name="Van Helmond Z."/>
            <person name="Wall M."/>
            <person name="Wallis J.M."/>
            <person name="White S."/>
            <person name="Whitehead S.L."/>
            <person name="Wilkinson J.E."/>
            <person name="Willey D.L."/>
            <person name="Williams H."/>
            <person name="Wilming L."/>
            <person name="Wray P.W."/>
            <person name="Wu Z."/>
            <person name="Coulson A."/>
            <person name="Vaudin M."/>
            <person name="Sulston J.E."/>
            <person name="Durbin R.M."/>
            <person name="Hubbard T."/>
            <person name="Wooster R."/>
            <person name="Dunham I."/>
            <person name="Carter N.P."/>
            <person name="McVean G."/>
            <person name="Ross M.T."/>
            <person name="Harrow J."/>
            <person name="Olson M.V."/>
            <person name="Beck S."/>
            <person name="Rogers J."/>
            <person name="Bentley D.R."/>
        </authorList>
    </citation>
    <scope>NUCLEOTIDE SEQUENCE [LARGE SCALE GENOMIC DNA]</scope>
</reference>
<reference key="3">
    <citation type="submission" date="2005-07" db="EMBL/GenBank/DDBJ databases">
        <authorList>
            <person name="Mural R.J."/>
            <person name="Istrail S."/>
            <person name="Sutton G.G."/>
            <person name="Florea L."/>
            <person name="Halpern A.L."/>
            <person name="Mobarry C.M."/>
            <person name="Lippert R."/>
            <person name="Walenz B."/>
            <person name="Shatkay H."/>
            <person name="Dew I."/>
            <person name="Miller J.R."/>
            <person name="Flanigan M.J."/>
            <person name="Edwards N.J."/>
            <person name="Bolanos R."/>
            <person name="Fasulo D."/>
            <person name="Halldorsson B.V."/>
            <person name="Hannenhalli S."/>
            <person name="Turner R."/>
            <person name="Yooseph S."/>
            <person name="Lu F."/>
            <person name="Nusskern D.R."/>
            <person name="Shue B.C."/>
            <person name="Zheng X.H."/>
            <person name="Zhong F."/>
            <person name="Delcher A.L."/>
            <person name="Huson D.H."/>
            <person name="Kravitz S.A."/>
            <person name="Mouchard L."/>
            <person name="Reinert K."/>
            <person name="Remington K.A."/>
            <person name="Clark A.G."/>
            <person name="Waterman M.S."/>
            <person name="Eichler E.E."/>
            <person name="Adams M.D."/>
            <person name="Hunkapiller M.W."/>
            <person name="Myers E.W."/>
            <person name="Venter J.C."/>
        </authorList>
    </citation>
    <scope>NUCLEOTIDE SEQUENCE [LARGE SCALE GENOMIC DNA]</scope>
</reference>
<reference key="4">
    <citation type="journal article" date="2004" name="Genome Res.">
        <title>The status, quality, and expansion of the NIH full-length cDNA project: the Mammalian Gene Collection (MGC).</title>
        <authorList>
            <consortium name="The MGC Project Team"/>
        </authorList>
    </citation>
    <scope>NUCLEOTIDE SEQUENCE [LARGE SCALE MRNA]</scope>
    <source>
        <tissue>Lung</tissue>
    </source>
</reference>
<reference key="5">
    <citation type="journal article" date="2000" name="Am. J. Physiol.">
        <title>KCNA10: a novel ion channel functionally related to both voltage-gated potassium and CNG cation channels.</title>
        <authorList>
            <person name="Lang R."/>
            <person name="Lee G."/>
            <person name="Liu W."/>
            <person name="Tian S."/>
            <person name="Rafi H."/>
            <person name="Orias M."/>
            <person name="Segal A.S."/>
            <person name="Desir G.V."/>
        </authorList>
    </citation>
    <scope>FUNCTION</scope>
    <scope>TRANSPORTER ACTIVITY</scope>
</reference>
<reference key="6">
    <citation type="journal article" date="2002" name="Am. J. Physiol.">
        <title>Regulation of the voltage-gated K+ channel KCNA10 by KCNA4B, a novel beta-subunit.</title>
        <authorList>
            <person name="Tian S."/>
            <person name="Liu W."/>
            <person name="Wu Y."/>
            <person name="Rafi H."/>
            <person name="Segal A.S."/>
            <person name="Desir G.V."/>
        </authorList>
    </citation>
    <scope>INTERACTION WITH POMP</scope>
    <scope>REGULATION BY CAMP</scope>
</reference>
<reference key="7">
    <citation type="journal article" date="2002" name="J. Am. Soc. Nephrol.">
        <title>Expression of KCNA10, a voltage-gated K channel, in glomerular endothelium and at the apical membrane of the renal proximal tubule.</title>
        <authorList>
            <person name="Yao X."/>
            <person name="Tian S."/>
            <person name="Chan H.-Y."/>
            <person name="Biemesderfer D."/>
            <person name="Desir G.V."/>
        </authorList>
    </citation>
    <scope>TISSUE SPECIFICITY</scope>
</reference>
<reference key="8">
    <citation type="journal article" date="2006" name="Science">
        <title>The consensus coding sequences of human breast and colorectal cancers.</title>
        <authorList>
            <person name="Sjoeblom T."/>
            <person name="Jones S."/>
            <person name="Wood L.D."/>
            <person name="Parsons D.W."/>
            <person name="Lin J."/>
            <person name="Barber T.D."/>
            <person name="Mandelker D."/>
            <person name="Leary R.J."/>
            <person name="Ptak J."/>
            <person name="Silliman N."/>
            <person name="Szabo S."/>
            <person name="Buckhaults P."/>
            <person name="Farrell C."/>
            <person name="Meeh P."/>
            <person name="Markowitz S.D."/>
            <person name="Willis J."/>
            <person name="Dawson D."/>
            <person name="Willson J.K.V."/>
            <person name="Gazdar A.F."/>
            <person name="Hartigan J."/>
            <person name="Wu L."/>
            <person name="Liu C."/>
            <person name="Parmigiani G."/>
            <person name="Park B.H."/>
            <person name="Bachman K.E."/>
            <person name="Papadopoulos N."/>
            <person name="Vogelstein B."/>
            <person name="Kinzler K.W."/>
            <person name="Velculescu V.E."/>
        </authorList>
    </citation>
    <scope>VARIANT [LARGE SCALE ANALYSIS] HIS-200</scope>
</reference>
<evidence type="ECO:0000250" key="1"/>
<evidence type="ECO:0000250" key="2">
    <source>
        <dbReference type="UniProtKB" id="P63142"/>
    </source>
</evidence>
<evidence type="ECO:0000255" key="3"/>
<evidence type="ECO:0000256" key="4">
    <source>
        <dbReference type="SAM" id="MobiDB-lite"/>
    </source>
</evidence>
<evidence type="ECO:0000269" key="5">
    <source>
    </source>
</evidence>
<evidence type="ECO:0000269" key="6">
    <source>
    </source>
</evidence>
<evidence type="ECO:0000269" key="7">
    <source>
    </source>
</evidence>
<evidence type="ECO:0000269" key="8">
    <source>
    </source>
</evidence>
<evidence type="ECO:0000305" key="9"/>
<evidence type="ECO:0000312" key="10">
    <source>
        <dbReference type="HGNC" id="HGNC:6219"/>
    </source>
</evidence>
<comment type="function">
    <text evidence="5">Voltage-gated potassium ion channel that mediates K(+) permeability of excitable membranes. When opened in response to the voltage difference across the membrane, KCNA10 channel selectively allows the flow of potassium ions across the membrane down their electrochemical gradient.</text>
</comment>
<comment type="catalytic activity">
    <reaction evidence="5">
        <text>K(+)(in) = K(+)(out)</text>
        <dbReference type="Rhea" id="RHEA:29463"/>
        <dbReference type="ChEBI" id="CHEBI:29103"/>
    </reaction>
</comment>
<comment type="activity regulation">
    <text evidence="6">The channel activity is up-regulated by cAMP.</text>
</comment>
<comment type="subunit">
    <text evidence="6">Homotetramer. Interacts with KCN4B/POMP. Interaction with KCN4B/POMP is necessary for the modulation of channel activity by cAMP.</text>
</comment>
<comment type="interaction">
    <interactant intactId="EBI-12265328">
        <id>Q16322</id>
    </interactant>
    <interactant intactId="EBI-8645574">
        <id>Q9UPQ8</id>
        <label>DOLK</label>
    </interactant>
    <organismsDiffer>false</organismsDiffer>
    <experiments>5</experiments>
</comment>
<comment type="interaction">
    <interactant intactId="EBI-12265328">
        <id>Q16322</id>
    </interactant>
    <interactant intactId="EBI-8286599">
        <id>Q09470</id>
        <label>KCNA1</label>
    </interactant>
    <organismsDiffer>false</organismsDiffer>
    <experiments>3</experiments>
</comment>
<comment type="interaction">
    <interactant intactId="EBI-12265328">
        <id>Q16322</id>
    </interactant>
    <interactant intactId="EBI-3932027">
        <id>P21145</id>
        <label>MAL</label>
    </interactant>
    <organismsDiffer>false</organismsDiffer>
    <experiments>3</experiments>
</comment>
<comment type="interaction">
    <interactant intactId="EBI-12265328">
        <id>Q16322</id>
    </interactant>
    <interactant intactId="EBI-347996">
        <id>O43765</id>
        <label>SGTA</label>
    </interactant>
    <organismsDiffer>false</organismsDiffer>
    <experiments>3</experiments>
</comment>
<comment type="interaction">
    <interactant intactId="EBI-12265328">
        <id>Q16322</id>
    </interactant>
    <interactant intactId="EBI-1045825">
        <id>P55061</id>
        <label>TMBIM6</label>
    </interactant>
    <organismsDiffer>false</organismsDiffer>
    <experiments>3</experiments>
</comment>
<comment type="subcellular location">
    <subcellularLocation>
        <location evidence="3">Membrane</location>
        <topology evidence="3">Multi-pass membrane protein</topology>
    </subcellularLocation>
</comment>
<comment type="tissue specificity">
    <text evidence="7">Detected in kidney, in proximal tubules, glomerular endothelium, in vascular endothelium and in smooth muscle cells.</text>
</comment>
<comment type="domain">
    <text>The N-terminus may be important in determining the rate of inactivation of the channel while the tail may play a role in modulation of channel activity and/or targeting of the channel to specific subcellular compartments.</text>
</comment>
<comment type="domain">
    <text evidence="2">The segment S4 is probably the voltage-sensor and is characterized by a series of positively charged amino acids at every third position.</text>
</comment>
<comment type="similarity">
    <text evidence="9">Belongs to the potassium channel family. A (Shaker) (TC 1.A.1.2) subfamily. Kv1.8/KCNA10 sub-subfamily.</text>
</comment>